<name>ISPD_ACTP7</name>
<protein>
    <recommendedName>
        <fullName evidence="1">2-C-methyl-D-erythritol 4-phosphate cytidylyltransferase</fullName>
        <ecNumber evidence="1">2.7.7.60</ecNumber>
    </recommendedName>
    <alternativeName>
        <fullName evidence="1">4-diphosphocytidyl-2C-methyl-D-erythritol synthase</fullName>
    </alternativeName>
    <alternativeName>
        <fullName evidence="1">MEP cytidylyltransferase</fullName>
        <shortName evidence="1">MCT</shortName>
    </alternativeName>
</protein>
<gene>
    <name evidence="1" type="primary">ispD</name>
    <name type="ordered locus">APP7_0861</name>
</gene>
<reference key="1">
    <citation type="submission" date="2008-06" db="EMBL/GenBank/DDBJ databases">
        <title>Genome and proteome analysis of A. pleuropneumoniae serotype 7.</title>
        <authorList>
            <person name="Linke B."/>
            <person name="Buettner F."/>
            <person name="Martinez-Arias R."/>
            <person name="Goesmann A."/>
            <person name="Baltes N."/>
            <person name="Tegetmeyer H."/>
            <person name="Singh M."/>
            <person name="Gerlach G.F."/>
        </authorList>
    </citation>
    <scope>NUCLEOTIDE SEQUENCE [LARGE SCALE GENOMIC DNA]</scope>
    <source>
        <strain>AP76</strain>
    </source>
</reference>
<keyword id="KW-0414">Isoprene biosynthesis</keyword>
<keyword id="KW-0548">Nucleotidyltransferase</keyword>
<keyword id="KW-0808">Transferase</keyword>
<evidence type="ECO:0000255" key="1">
    <source>
        <dbReference type="HAMAP-Rule" id="MF_00108"/>
    </source>
</evidence>
<proteinExistence type="inferred from homology"/>
<sequence length="226" mass="25198">MTRKIIAVIPASGVGSRMQAGLPKQYLKLQNKTILEHTLEIFLAHPDIEKIVVAVAETDPFYPQVALLDSPKIQIVFGGETRAHSVFNALQVIEDDSWVLVHDAARPCLKRSDLDKLLQSDAKHGAILATPAIDTMKRADGDKIMHTEDRSTLWHALTPQFFPTHLLKQALISAFEKNLTVTDEASAMEFSGYQPRLIAGRSDNLKITRPEDLALAEFYLTQNTEK</sequence>
<dbReference type="EC" id="2.7.7.60" evidence="1"/>
<dbReference type="EMBL" id="CP001091">
    <property type="protein sequence ID" value="ACE61513.1"/>
    <property type="molecule type" value="Genomic_DNA"/>
</dbReference>
<dbReference type="RefSeq" id="WP_005607739.1">
    <property type="nucleotide sequence ID" value="NC_010939.1"/>
</dbReference>
<dbReference type="SMR" id="B3H1E1"/>
<dbReference type="KEGG" id="apa:APP7_0861"/>
<dbReference type="HOGENOM" id="CLU_061281_3_1_6"/>
<dbReference type="UniPathway" id="UPA00056">
    <property type="reaction ID" value="UER00093"/>
</dbReference>
<dbReference type="Proteomes" id="UP000001226">
    <property type="component" value="Chromosome"/>
</dbReference>
<dbReference type="GO" id="GO:0050518">
    <property type="term" value="F:2-C-methyl-D-erythritol 4-phosphate cytidylyltransferase activity"/>
    <property type="evidence" value="ECO:0007669"/>
    <property type="project" value="UniProtKB-UniRule"/>
</dbReference>
<dbReference type="GO" id="GO:0019288">
    <property type="term" value="P:isopentenyl diphosphate biosynthetic process, methylerythritol 4-phosphate pathway"/>
    <property type="evidence" value="ECO:0007669"/>
    <property type="project" value="UniProtKB-UniRule"/>
</dbReference>
<dbReference type="CDD" id="cd02516">
    <property type="entry name" value="CDP-ME_synthetase"/>
    <property type="match status" value="1"/>
</dbReference>
<dbReference type="FunFam" id="3.90.550.10:FF:000003">
    <property type="entry name" value="2-C-methyl-D-erythritol 4-phosphate cytidylyltransferase"/>
    <property type="match status" value="1"/>
</dbReference>
<dbReference type="Gene3D" id="3.90.550.10">
    <property type="entry name" value="Spore Coat Polysaccharide Biosynthesis Protein SpsA, Chain A"/>
    <property type="match status" value="1"/>
</dbReference>
<dbReference type="HAMAP" id="MF_00108">
    <property type="entry name" value="IspD"/>
    <property type="match status" value="1"/>
</dbReference>
<dbReference type="InterPro" id="IPR001228">
    <property type="entry name" value="IspD"/>
</dbReference>
<dbReference type="InterPro" id="IPR034683">
    <property type="entry name" value="IspD/TarI"/>
</dbReference>
<dbReference type="InterPro" id="IPR050088">
    <property type="entry name" value="IspD/TarI_cytidylyltransf_bact"/>
</dbReference>
<dbReference type="InterPro" id="IPR018294">
    <property type="entry name" value="ISPD_synthase_CS"/>
</dbReference>
<dbReference type="InterPro" id="IPR029044">
    <property type="entry name" value="Nucleotide-diphossugar_trans"/>
</dbReference>
<dbReference type="NCBIfam" id="TIGR00453">
    <property type="entry name" value="ispD"/>
    <property type="match status" value="1"/>
</dbReference>
<dbReference type="PANTHER" id="PTHR32125">
    <property type="entry name" value="2-C-METHYL-D-ERYTHRITOL 4-PHOSPHATE CYTIDYLYLTRANSFERASE, CHLOROPLASTIC"/>
    <property type="match status" value="1"/>
</dbReference>
<dbReference type="PANTHER" id="PTHR32125:SF4">
    <property type="entry name" value="2-C-METHYL-D-ERYTHRITOL 4-PHOSPHATE CYTIDYLYLTRANSFERASE, CHLOROPLASTIC"/>
    <property type="match status" value="1"/>
</dbReference>
<dbReference type="Pfam" id="PF01128">
    <property type="entry name" value="IspD"/>
    <property type="match status" value="1"/>
</dbReference>
<dbReference type="SUPFAM" id="SSF53448">
    <property type="entry name" value="Nucleotide-diphospho-sugar transferases"/>
    <property type="match status" value="1"/>
</dbReference>
<dbReference type="PROSITE" id="PS01295">
    <property type="entry name" value="ISPD"/>
    <property type="match status" value="1"/>
</dbReference>
<organism>
    <name type="scientific">Actinobacillus pleuropneumoniae serotype 7 (strain AP76)</name>
    <dbReference type="NCBI Taxonomy" id="537457"/>
    <lineage>
        <taxon>Bacteria</taxon>
        <taxon>Pseudomonadati</taxon>
        <taxon>Pseudomonadota</taxon>
        <taxon>Gammaproteobacteria</taxon>
        <taxon>Pasteurellales</taxon>
        <taxon>Pasteurellaceae</taxon>
        <taxon>Actinobacillus</taxon>
    </lineage>
</organism>
<feature type="chain" id="PRO_1000094306" description="2-C-methyl-D-erythritol 4-phosphate cytidylyltransferase">
    <location>
        <begin position="1"/>
        <end position="226"/>
    </location>
</feature>
<feature type="site" description="Transition state stabilizer" evidence="1">
    <location>
        <position position="17"/>
    </location>
</feature>
<feature type="site" description="Transition state stabilizer" evidence="1">
    <location>
        <position position="24"/>
    </location>
</feature>
<feature type="site" description="Positions MEP for the nucleophilic attack" evidence="1">
    <location>
        <position position="150"/>
    </location>
</feature>
<feature type="site" description="Positions MEP for the nucleophilic attack" evidence="1">
    <location>
        <position position="206"/>
    </location>
</feature>
<comment type="function">
    <text evidence="1">Catalyzes the formation of 4-diphosphocytidyl-2-C-methyl-D-erythritol from CTP and 2-C-methyl-D-erythritol 4-phosphate (MEP).</text>
</comment>
<comment type="catalytic activity">
    <reaction evidence="1">
        <text>2-C-methyl-D-erythritol 4-phosphate + CTP + H(+) = 4-CDP-2-C-methyl-D-erythritol + diphosphate</text>
        <dbReference type="Rhea" id="RHEA:13429"/>
        <dbReference type="ChEBI" id="CHEBI:15378"/>
        <dbReference type="ChEBI" id="CHEBI:33019"/>
        <dbReference type="ChEBI" id="CHEBI:37563"/>
        <dbReference type="ChEBI" id="CHEBI:57823"/>
        <dbReference type="ChEBI" id="CHEBI:58262"/>
        <dbReference type="EC" id="2.7.7.60"/>
    </reaction>
</comment>
<comment type="pathway">
    <text evidence="1">Isoprenoid biosynthesis; isopentenyl diphosphate biosynthesis via DXP pathway; isopentenyl diphosphate from 1-deoxy-D-xylulose 5-phosphate: step 2/6.</text>
</comment>
<comment type="similarity">
    <text evidence="1">Belongs to the IspD/TarI cytidylyltransferase family. IspD subfamily.</text>
</comment>
<accession>B3H1E1</accession>